<dbReference type="EMBL" id="X07992">
    <property type="protein sequence ID" value="CAA30800.1"/>
    <property type="molecule type" value="Genomic_DNA"/>
</dbReference>
<dbReference type="EMBL" id="M20390">
    <property type="protein sequence ID" value="AAA22860.1"/>
    <property type="molecule type" value="Genomic_DNA"/>
</dbReference>
<dbReference type="EMBL" id="AJ224477">
    <property type="protein sequence ID" value="CAB37654.1"/>
    <property type="molecule type" value="Genomic_DNA"/>
</dbReference>
<dbReference type="PIR" id="A28211">
    <property type="entry name" value="A28211"/>
</dbReference>
<dbReference type="RefSeq" id="WP_012291792.1">
    <property type="nucleotide sequence ID" value="NZ_LWHI01000001.1"/>
</dbReference>
<dbReference type="PDB" id="5FOY">
    <property type="method" value="X-ray"/>
    <property type="resolution" value="2.25 A"/>
    <property type="chains" value="B=1-448"/>
</dbReference>
<dbReference type="PDB" id="5FOZ">
    <property type="method" value="X-ray"/>
    <property type="resolution" value="2.40 A"/>
    <property type="chains" value="B=1-448"/>
</dbReference>
<dbReference type="PDB" id="5G37">
    <property type="method" value="X-ray"/>
    <property type="resolution" value="2.50 A"/>
    <property type="chains" value="B=1-448"/>
</dbReference>
<dbReference type="PDBsum" id="5FOY"/>
<dbReference type="PDBsum" id="5FOZ"/>
<dbReference type="PDBsum" id="5G37"/>
<dbReference type="SASBDB" id="P10565"/>
<dbReference type="SMR" id="P10565"/>
<dbReference type="STRING" id="1421.A2J09_08695"/>
<dbReference type="TCDB" id="1.C.4.7.1">
    <property type="family name" value="the aerolysin channel-forming toxin (aerolysin) family"/>
</dbReference>
<dbReference type="GO" id="GO:0090729">
    <property type="term" value="F:toxin activity"/>
    <property type="evidence" value="ECO:0007669"/>
    <property type="project" value="UniProtKB-KW"/>
</dbReference>
<dbReference type="GO" id="GO:0030435">
    <property type="term" value="P:sporulation resulting in formation of a cellular spore"/>
    <property type="evidence" value="ECO:0007669"/>
    <property type="project" value="UniProtKB-KW"/>
</dbReference>
<dbReference type="CDD" id="cd23429">
    <property type="entry name" value="beta-trefoil_Ricin_BinAB"/>
    <property type="match status" value="1"/>
</dbReference>
<dbReference type="DisProt" id="DP03018"/>
<dbReference type="Gene3D" id="2.80.10.50">
    <property type="match status" value="1"/>
</dbReference>
<sequence>MCDSKDNSGVSEKCGKKFTNYPLNTTPTSLNYNLPEISKKFYNLKNKYSRNGYGLSKTEFPSSIENCPSNEYSIMYDNKDPRFLIRFLLDDGRYIIADRDDGEVFDEAPTYLDNNNHPIISRHYTGEERQKFEQVGSGDYITGEQFFQFYTQNKTRVLSNCRALDSRTILLSTAKIFPIYPPASETQLTAFVNSSFYAAAIPQLPQTSLLENIPEPTSLDDSGVLPKDAVRAVKGSALLPCIIVHDPNLNNSDKMKFNTYYLLEYKEYWHQLWSQIIPAHQTVKIQERTGISEVVQNSMIEDLNMYIGADFGMLFYFRSSGFKEQITRGLNRPLSQTTTQLGERVEEMEYYNSNDLDVRYVKYALAREFTLKRVNGEIVKNWVAVDYRLAGIQSYPNAPITNPLTLTKHTIIRCENSYDGHIFKTPLIFKNGEVIVKTNEELIPKINQ</sequence>
<comment type="function">
    <text evidence="1 6 7 8">Component of a binary toxin active against Culex and some Aedes mosquito larvae (PubMed:8419297, Ref.6). This subunit alone has no toxic larvicidal activity (PubMed:3926751). This subunit is responsible for localized binding to specific regions of the host larval gut. Binary toxin internalization into host gut cells requires both proteins (By similarity).</text>
</comment>
<comment type="subunit">
    <text evidence="2 3 6">Forms a heterodimer with BinA (PubMed:27680699). Upon toxin crystal solubilization with NaOH at pH 12, only the 63-kDa (binB) and 43-kDa (binA) proteins were detected (PubMed:3926751). Interacts with mosquito protein Cpm1 which acts as its host receptor (PubMed:11483434).</text>
</comment>
<comment type="subcellular location">
    <subcellularLocation>
        <location evidence="14">Spore</location>
        <location evidence="14">Perispore</location>
    </subcellularLocation>
</comment>
<comment type="developmental stage">
    <text evidence="5">Total crystal protein is produced during sporulation, it appears after 6 hours of growth, and represents about 4.8% of cellular dry weight in stationary phase. It probably accumulates next to spores within the exosporeum.</text>
</comment>
<comment type="domain">
    <text evidence="3 13">Has an N-terminal beta-trefoil domain and a C-terminal pore-forming domain. The trefoil domain has barrel and cap subdomains; the cap has 3 possible carbohydrate-binding modules while the barrel is involved in host cell receptor binding. At neutral pH the carbohydrate-binding modules are accessible on the toxin surface but the barrel subdomain is not (PubMed:27680699). The crystal is very stable at neutral pH, upon ingestion by larvae the crystals dissolve in the alkaline midgut. As the pH rises the 2 subunits compact, while deprotonation at up to 4 sites (including the N- and C-termini) increases the accessibility of the propeptides and moves subdomains. The combined pH-induced changes are thought to expose the previously hidden receptor-binding motif and lead to crystal dissolution (Probable).</text>
</comment>
<comment type="PTM">
    <text evidence="6">Processed by proteases extracted from C.pipiens larval gut; unlike its partner BinA, it does not form a stable digestion product.</text>
</comment>
<comment type="miscellaneous">
    <text evidence="4 6">In protein gels runs as a 63 kDa protein.</text>
</comment>
<comment type="similarity">
    <text evidence="12">Belongs to the toxin_10 family.</text>
</comment>
<gene>
    <name type="primary">binB</name>
    <name type="synonym">sph04</name>
</gene>
<keyword id="KW-0002">3D-structure</keyword>
<keyword id="KW-1015">Disulfide bond</keyword>
<keyword id="KW-0749">Sporulation</keyword>
<keyword id="KW-0800">Toxin</keyword>
<keyword id="KW-0843">Virulence</keyword>
<organism>
    <name type="scientific">Lysinibacillus sphaericus</name>
    <name type="common">Bacillus sphaericus</name>
    <dbReference type="NCBI Taxonomy" id="1421"/>
    <lineage>
        <taxon>Bacteria</taxon>
        <taxon>Bacillati</taxon>
        <taxon>Bacillota</taxon>
        <taxon>Bacilli</taxon>
        <taxon>Bacillales</taxon>
        <taxon>Bacillaceae</taxon>
        <taxon>Lysinibacillus</taxon>
    </lineage>
</organism>
<reference key="1">
    <citation type="journal article" date="1988" name="Nucleic Acids Res.">
        <title>Nucleotide and deduced amino acid sequence of the Bacillus sphaericus 1593M gene encoding a 51.4 kD polypeptide which acts synergistically with the 42 kD protein for expression of the larvicidal toxin.</title>
        <authorList>
            <person name="Arapinis C."/>
            <person name="de la Torre F."/>
            <person name="Szulmajster J."/>
        </authorList>
    </citation>
    <scope>NUCLEOTIDE SEQUENCE [GENOMIC DNA]</scope>
    <source>
        <strain>ATCC 33203 / 1593</strain>
    </source>
</reference>
<reference key="2">
    <citation type="journal article" date="1988" name="J. Bacteriol.">
        <title>Sequence analysis of the mosquitocidal toxin genes encoding 51.4- and 41.9-kilodalton proteins from Bacillus sphaericus 2362 and 2297.</title>
        <authorList>
            <person name="Baumann L."/>
            <person name="Broadwell A.H."/>
            <person name="Baumann P."/>
        </authorList>
    </citation>
    <scope>NUCLEOTIDE SEQUENCE [GENOMIC DNA]</scope>
    <source>
        <strain>2362</strain>
    </source>
</reference>
<reference key="3">
    <citation type="submission" date="1998-02" db="EMBL/GenBank/DDBJ databases">
        <title>Transposition of Bacillus sphaericus toxin genes.</title>
        <authorList>
            <person name="Humphreys M.J."/>
            <person name="Coleman M.M."/>
            <person name="Berry C."/>
        </authorList>
    </citation>
    <scope>NUCLEOTIDE SEQUENCE [GENOMIC DNA]</scope>
    <source>
        <strain>ATCC 33203 / 1593</strain>
    </source>
</reference>
<reference key="4">
    <citation type="journal article" date="1985" name="J. Bacteriol.">
        <title>Purification of the larvicidal toxin of Bacillus sphaericus and evidence for high-molecular-weight precursors.</title>
        <authorList>
            <person name="Baumann P."/>
            <person name="Unterman B.M."/>
            <person name="Baumann L."/>
            <person name="Broadwell A.H."/>
            <person name="Abbene S.J."/>
            <person name="Bowditch R.D."/>
        </authorList>
    </citation>
    <scope>NO TOXIC FUNCTION ON ITS OWN</scope>
    <scope>SUBUNIT</scope>
    <scope>SUBCELLULAR LOCATION</scope>
    <scope>PROTEOLYTIC CLEAVAGE</scope>
    <source>
        <strain>2362</strain>
    </source>
</reference>
<reference key="5">
    <citation type="journal article" date="1986" name="Appl. Environ. Microbiol.">
        <title>Sporulation-associated activation of Bacillus sphaericus larvicide.</title>
        <authorList>
            <person name="Broadwell A.H."/>
            <person name="Baumann P."/>
        </authorList>
    </citation>
    <scope>DEVELOPMENTAL STAGE</scope>
    <source>
        <strain>2362</strain>
    </source>
</reference>
<reference key="6">
    <citation type="journal article" date="1990" name="Curr. Microbiol.">
        <title>Larvicidal properties of the 42 and 51 kilodalton Bacillus sphaericus proteins expressed in different bacterial hosts: evidence for a binary toxin.</title>
        <authorList>
            <person name="Broadwell A.H."/>
            <person name="Baumann L."/>
            <person name="Baumann P."/>
        </authorList>
    </citation>
    <scope>TOXIN IS BINARY</scope>
    <source>
        <strain>2362</strain>
    </source>
</reference>
<reference key="7">
    <citation type="journal article" date="1993" name="J. Bacteriol.">
        <title>Genetic determinants of host ranges of Bacillus sphaericus mosquito larvicidal toxins.</title>
        <authorList>
            <person name="Berry C."/>
            <person name="Hindley J."/>
            <person name="Ehrhardt A.F."/>
            <person name="Grounds T."/>
            <person name="de Souza I."/>
            <person name="Davidson E.W."/>
        </authorList>
    </citation>
    <scope>HOST RANGE</scope>
    <source>
        <strain>2362</strain>
    </source>
</reference>
<reference key="8">
    <citation type="journal article" date="2001" name="Insect Biochem. Mol. Biol.">
        <title>The receptor of Bacillus sphaericus binary toxin in Culex pipiens (Diptera: Culicidae) midgut: molecular cloning and expression.</title>
        <authorList>
            <person name="Darboux I."/>
            <person name="Nielsen-LeRoux C."/>
            <person name="Charles J.F."/>
            <person name="Pauron D."/>
        </authorList>
    </citation>
    <scope>INTERACTION WITH CULEX PIPIENS CPM1 RECEPTOR</scope>
    <source>
        <strain>ATCC 33203 / 1593</strain>
    </source>
</reference>
<reference evidence="15 16 17" key="9">
    <citation type="journal article" date="2016" name="Nature">
        <title>De novo phasing with X-ray laser reveals mosquito larvicide BinAB structure.</title>
        <authorList>
            <person name="Colletier J.P."/>
            <person name="Sawaya M.R."/>
            <person name="Gingery M."/>
            <person name="Rodriguez J.A."/>
            <person name="Cascio D."/>
            <person name="Brewster A.S."/>
            <person name="Michels-Clark T."/>
            <person name="Hice R.H."/>
            <person name="Coquelle N."/>
            <person name="Boutet S."/>
            <person name="Williams G.J."/>
            <person name="Messerschmidt M."/>
            <person name="DePonte D.P."/>
            <person name="Sierra R.G."/>
            <person name="Laksmono H."/>
            <person name="Koglin J.E."/>
            <person name="Hunter M.S."/>
            <person name="Park H.W."/>
            <person name="Uervirojnangkoorn M."/>
            <person name="Bideshi D.K."/>
            <person name="Brunger A.T."/>
            <person name="Federici B.A."/>
            <person name="Sauter N.K."/>
            <person name="Eisenberg D.S."/>
        </authorList>
    </citation>
    <scope>X-RAY CRYSTALLOGRAPHY (2.25 ANGSTROMS) IN COMPLEX WITH BINA AT PH 5; PH 7 AND PH 10</scope>
    <scope>SUBUNIT</scope>
    <scope>DOMAIN</scope>
    <scope>DISULFIDE BOND</scope>
    <source>
        <strain>2362</strain>
    </source>
</reference>
<name>BINB1_LYSSH</name>
<feature type="chain" id="PRO_0000174114" description="Binary larvicide subunit BinB">
    <location>
        <begin position="1"/>
        <end position="448"/>
    </location>
</feature>
<feature type="region of interest" description="Beta-trefoil domain" evidence="3">
    <location>
        <begin position="1"/>
        <end position="198"/>
    </location>
</feature>
<feature type="region of interest" description="Probable pore-forming domain" evidence="3">
    <location>
        <begin position="199"/>
        <end position="448"/>
    </location>
</feature>
<feature type="disulfide bond" evidence="3 15 16 17">
    <location>
        <begin position="67"/>
        <end position="161"/>
    </location>
</feature>
<feature type="helix" evidence="18">
    <location>
        <begin position="36"/>
        <end position="38"/>
    </location>
</feature>
<feature type="strand" evidence="18">
    <location>
        <begin position="39"/>
        <end position="48"/>
    </location>
</feature>
<feature type="strand" evidence="18">
    <location>
        <begin position="54"/>
        <end position="56"/>
    </location>
</feature>
<feature type="strand" evidence="18">
    <location>
        <begin position="71"/>
        <end position="73"/>
    </location>
</feature>
<feature type="strand" evidence="18">
    <location>
        <begin position="75"/>
        <end position="81"/>
    </location>
</feature>
<feature type="strand" evidence="18">
    <location>
        <begin position="84"/>
        <end position="88"/>
    </location>
</feature>
<feature type="strand" evidence="18">
    <location>
        <begin position="94"/>
        <end position="98"/>
    </location>
</feature>
<feature type="turn" evidence="18">
    <location>
        <begin position="99"/>
        <end position="101"/>
    </location>
</feature>
<feature type="strand" evidence="18">
    <location>
        <begin position="104"/>
        <end position="107"/>
    </location>
</feature>
<feature type="helix" evidence="19">
    <location>
        <begin position="113"/>
        <end position="115"/>
    </location>
</feature>
<feature type="strand" evidence="18">
    <location>
        <begin position="117"/>
        <end position="122"/>
    </location>
</feature>
<feature type="helix" evidence="18">
    <location>
        <begin position="128"/>
        <end position="130"/>
    </location>
</feature>
<feature type="strand" evidence="18">
    <location>
        <begin position="131"/>
        <end position="138"/>
    </location>
</feature>
<feature type="helix" evidence="18">
    <location>
        <begin position="140"/>
        <end position="142"/>
    </location>
</feature>
<feature type="strand" evidence="18">
    <location>
        <begin position="146"/>
        <end position="151"/>
    </location>
</feature>
<feature type="turn" evidence="18">
    <location>
        <begin position="152"/>
        <end position="155"/>
    </location>
</feature>
<feature type="strand" evidence="18">
    <location>
        <begin position="156"/>
        <end position="162"/>
    </location>
</feature>
<feature type="strand" evidence="18">
    <location>
        <begin position="164"/>
        <end position="166"/>
    </location>
</feature>
<feature type="strand" evidence="18">
    <location>
        <begin position="168"/>
        <end position="174"/>
    </location>
</feature>
<feature type="turn" evidence="18">
    <location>
        <begin position="179"/>
        <end position="182"/>
    </location>
</feature>
<feature type="helix" evidence="18">
    <location>
        <begin position="185"/>
        <end position="189"/>
    </location>
</feature>
<feature type="strand" evidence="18">
    <location>
        <begin position="191"/>
        <end position="198"/>
    </location>
</feature>
<feature type="strand" evidence="20">
    <location>
        <begin position="218"/>
        <end position="220"/>
    </location>
</feature>
<feature type="helix" evidence="18">
    <location>
        <begin position="226"/>
        <end position="228"/>
    </location>
</feature>
<feature type="strand" evidence="18">
    <location>
        <begin position="232"/>
        <end position="240"/>
    </location>
</feature>
<feature type="helix" evidence="18">
    <location>
        <begin position="241"/>
        <end position="243"/>
    </location>
</feature>
<feature type="helix" evidence="18">
    <location>
        <begin position="251"/>
        <end position="257"/>
    </location>
</feature>
<feature type="strand" evidence="18">
    <location>
        <begin position="259"/>
        <end position="277"/>
    </location>
</feature>
<feature type="strand" evidence="18">
    <location>
        <begin position="282"/>
        <end position="290"/>
    </location>
</feature>
<feature type="helix" evidence="18">
    <location>
        <begin position="293"/>
        <end position="303"/>
    </location>
</feature>
<feature type="strand" evidence="18">
    <location>
        <begin position="304"/>
        <end position="308"/>
    </location>
</feature>
<feature type="strand" evidence="18">
    <location>
        <begin position="313"/>
        <end position="315"/>
    </location>
</feature>
<feature type="helix" evidence="18">
    <location>
        <begin position="317"/>
        <end position="320"/>
    </location>
</feature>
<feature type="helix" evidence="18">
    <location>
        <begin position="323"/>
        <end position="330"/>
    </location>
</feature>
<feature type="strand" evidence="18">
    <location>
        <begin position="343"/>
        <end position="351"/>
    </location>
</feature>
<feature type="strand" evidence="18">
    <location>
        <begin position="354"/>
        <end position="356"/>
    </location>
</feature>
<feature type="strand" evidence="18">
    <location>
        <begin position="358"/>
        <end position="372"/>
    </location>
</feature>
<feature type="strand" evidence="18">
    <location>
        <begin position="378"/>
        <end position="396"/>
    </location>
</feature>
<feature type="turn" evidence="18">
    <location>
        <begin position="398"/>
        <end position="400"/>
    </location>
</feature>
<feature type="strand" evidence="18">
    <location>
        <begin position="404"/>
        <end position="413"/>
    </location>
</feature>
<feature type="strand" evidence="18">
    <location>
        <begin position="425"/>
        <end position="429"/>
    </location>
</feature>
<feature type="helix" evidence="18">
    <location>
        <begin position="437"/>
        <end position="439"/>
    </location>
</feature>
<feature type="strand" evidence="18">
    <location>
        <begin position="442"/>
        <end position="444"/>
    </location>
</feature>
<proteinExistence type="evidence at protein level"/>
<evidence type="ECO:0000250" key="1">
    <source>
        <dbReference type="UniProtKB" id="P18568"/>
    </source>
</evidence>
<evidence type="ECO:0000269" key="2">
    <source>
    </source>
</evidence>
<evidence type="ECO:0000269" key="3">
    <source>
    </source>
</evidence>
<evidence type="ECO:0000269" key="4">
    <source>
    </source>
</evidence>
<evidence type="ECO:0000269" key="5">
    <source>
    </source>
</evidence>
<evidence type="ECO:0000269" key="6">
    <source>
    </source>
</evidence>
<evidence type="ECO:0000269" key="7">
    <source>
    </source>
</evidence>
<evidence type="ECO:0000269" key="8">
    <source ref="6"/>
</evidence>
<evidence type="ECO:0000303" key="9">
    <source>
    </source>
</evidence>
<evidence type="ECO:0000303" key="10">
    <source>
    </source>
</evidence>
<evidence type="ECO:0000303" key="11">
    <source>
    </source>
</evidence>
<evidence type="ECO:0000305" key="12"/>
<evidence type="ECO:0000305" key="13">
    <source>
    </source>
</evidence>
<evidence type="ECO:0000305" key="14">
    <source>
    </source>
</evidence>
<evidence type="ECO:0007744" key="15">
    <source>
        <dbReference type="PDB" id="5FOY"/>
    </source>
</evidence>
<evidence type="ECO:0007744" key="16">
    <source>
        <dbReference type="PDB" id="5FOZ"/>
    </source>
</evidence>
<evidence type="ECO:0007744" key="17">
    <source>
        <dbReference type="PDB" id="5G37"/>
    </source>
</evidence>
<evidence type="ECO:0007829" key="18">
    <source>
        <dbReference type="PDB" id="5FOY"/>
    </source>
</evidence>
<evidence type="ECO:0007829" key="19">
    <source>
        <dbReference type="PDB" id="5FOZ"/>
    </source>
</evidence>
<evidence type="ECO:0007829" key="20">
    <source>
        <dbReference type="PDB" id="5G37"/>
    </source>
</evidence>
<protein>
    <recommendedName>
        <fullName evidence="12">Binary larvicide subunit BinB</fullName>
    </recommendedName>
    <alternativeName>
        <fullName evidence="11">63 kDa toxin crystal protein</fullName>
    </alternativeName>
    <alternativeName>
        <fullName evidence="9">Binary paracrystalline larvicide subunit BinB</fullName>
    </alternativeName>
    <alternativeName>
        <fullName evidence="10">Larvicidal toxin 51.4 kDa protein</fullName>
    </alternativeName>
</protein>
<accession>P10565</accession>